<proteinExistence type="inferred from homology"/>
<feature type="chain" id="PRO_0000292521" description="Vacuolar protein sorting-associated protein 27">
    <location>
        <begin position="1"/>
        <end position="720"/>
    </location>
</feature>
<feature type="domain" description="VHS" evidence="4">
    <location>
        <begin position="18"/>
        <end position="150"/>
    </location>
</feature>
<feature type="domain" description="UIM 1" evidence="3">
    <location>
        <begin position="264"/>
        <end position="283"/>
    </location>
</feature>
<feature type="domain" description="UIM 2" evidence="3">
    <location>
        <begin position="313"/>
        <end position="332"/>
    </location>
</feature>
<feature type="zinc finger region" description="FYVE-type; degenerate" evidence="2">
    <location>
        <begin position="168"/>
        <end position="228"/>
    </location>
</feature>
<feature type="region of interest" description="Disordered" evidence="5">
    <location>
        <begin position="230"/>
        <end position="262"/>
    </location>
</feature>
<feature type="region of interest" description="Disordered" evidence="5">
    <location>
        <begin position="280"/>
        <end position="316"/>
    </location>
</feature>
<feature type="region of interest" description="Disordered" evidence="5">
    <location>
        <begin position="479"/>
        <end position="720"/>
    </location>
</feature>
<feature type="compositionally biased region" description="Low complexity" evidence="5">
    <location>
        <begin position="290"/>
        <end position="301"/>
    </location>
</feature>
<feature type="compositionally biased region" description="Polar residues" evidence="5">
    <location>
        <begin position="506"/>
        <end position="518"/>
    </location>
</feature>
<feature type="compositionally biased region" description="Low complexity" evidence="5">
    <location>
        <begin position="519"/>
        <end position="555"/>
    </location>
</feature>
<feature type="compositionally biased region" description="Low complexity" evidence="5">
    <location>
        <begin position="562"/>
        <end position="577"/>
    </location>
</feature>
<feature type="compositionally biased region" description="Low complexity" evidence="5">
    <location>
        <begin position="594"/>
        <end position="614"/>
    </location>
</feature>
<feature type="compositionally biased region" description="Pro residues" evidence="5">
    <location>
        <begin position="650"/>
        <end position="667"/>
    </location>
</feature>
<feature type="compositionally biased region" description="Low complexity" evidence="5">
    <location>
        <begin position="668"/>
        <end position="689"/>
    </location>
</feature>
<feature type="compositionally biased region" description="Polar residues" evidence="5">
    <location>
        <begin position="699"/>
        <end position="711"/>
    </location>
</feature>
<feature type="binding site" evidence="2">
    <location>
        <position position="174"/>
    </location>
    <ligand>
        <name>Zn(2+)</name>
        <dbReference type="ChEBI" id="CHEBI:29105"/>
    </ligand>
</feature>
<feature type="binding site" evidence="2">
    <location>
        <position position="177"/>
    </location>
    <ligand>
        <name>Zn(2+)</name>
        <dbReference type="ChEBI" id="CHEBI:29105"/>
    </ligand>
</feature>
<feature type="binding site" evidence="2">
    <location>
        <position position="198"/>
    </location>
    <ligand>
        <name>Zn(2+)</name>
        <dbReference type="ChEBI" id="CHEBI:29105"/>
    </ligand>
</feature>
<feature type="binding site" evidence="2">
    <location>
        <position position="201"/>
    </location>
    <ligand>
        <name>Zn(2+)</name>
        <dbReference type="ChEBI" id="CHEBI:29105"/>
    </ligand>
</feature>
<evidence type="ECO:0000250" key="1"/>
<evidence type="ECO:0000255" key="2">
    <source>
        <dbReference type="PROSITE-ProRule" id="PRU00091"/>
    </source>
</evidence>
<evidence type="ECO:0000255" key="3">
    <source>
        <dbReference type="PROSITE-ProRule" id="PRU00213"/>
    </source>
</evidence>
<evidence type="ECO:0000255" key="4">
    <source>
        <dbReference type="PROSITE-ProRule" id="PRU00218"/>
    </source>
</evidence>
<evidence type="ECO:0000256" key="5">
    <source>
        <dbReference type="SAM" id="MobiDB-lite"/>
    </source>
</evidence>
<evidence type="ECO:0000305" key="6"/>
<dbReference type="EMBL" id="CH445349">
    <property type="protein sequence ID" value="EAT79493.2"/>
    <property type="status" value="ALT_SEQ"/>
    <property type="molecule type" value="Genomic_DNA"/>
</dbReference>
<dbReference type="RefSeq" id="XP_001803378.1">
    <property type="nucleotide sequence ID" value="XM_001803326.1"/>
</dbReference>
<dbReference type="SMR" id="Q0U4Z8"/>
<dbReference type="FunCoup" id="Q0U4Z8">
    <property type="interactions" value="95"/>
</dbReference>
<dbReference type="STRING" id="321614.Q0U4Z8"/>
<dbReference type="GeneID" id="5980293"/>
<dbReference type="KEGG" id="pno:SNOG_13166"/>
<dbReference type="VEuPathDB" id="FungiDB:JI435_131660"/>
<dbReference type="eggNOG" id="KOG1818">
    <property type="taxonomic scope" value="Eukaryota"/>
</dbReference>
<dbReference type="InParanoid" id="Q0U4Z8"/>
<dbReference type="OMA" id="DQQCSAK"/>
<dbReference type="OrthoDB" id="957735at2759"/>
<dbReference type="Proteomes" id="UP000001055">
    <property type="component" value="Unassembled WGS sequence"/>
</dbReference>
<dbReference type="GO" id="GO:0010008">
    <property type="term" value="C:endosome membrane"/>
    <property type="evidence" value="ECO:0007669"/>
    <property type="project" value="UniProtKB-SubCell"/>
</dbReference>
<dbReference type="GO" id="GO:0033565">
    <property type="term" value="C:ESCRT-0 complex"/>
    <property type="evidence" value="ECO:0000318"/>
    <property type="project" value="GO_Central"/>
</dbReference>
<dbReference type="GO" id="GO:0032266">
    <property type="term" value="F:phosphatidylinositol-3-phosphate binding"/>
    <property type="evidence" value="ECO:0000318"/>
    <property type="project" value="GO_Central"/>
</dbReference>
<dbReference type="GO" id="GO:0043130">
    <property type="term" value="F:ubiquitin binding"/>
    <property type="evidence" value="ECO:0000318"/>
    <property type="project" value="GO_Central"/>
</dbReference>
<dbReference type="GO" id="GO:0008270">
    <property type="term" value="F:zinc ion binding"/>
    <property type="evidence" value="ECO:0007669"/>
    <property type="project" value="UniProtKB-KW"/>
</dbReference>
<dbReference type="GO" id="GO:0006623">
    <property type="term" value="P:protein targeting to vacuole"/>
    <property type="evidence" value="ECO:0000318"/>
    <property type="project" value="GO_Central"/>
</dbReference>
<dbReference type="GO" id="GO:0043328">
    <property type="term" value="P:protein transport to vacuole involved in ubiquitin-dependent protein catabolic process via the multivesicular body sorting pathway"/>
    <property type="evidence" value="ECO:0000318"/>
    <property type="project" value="GO_Central"/>
</dbReference>
<dbReference type="CDD" id="cd15735">
    <property type="entry name" value="FYVE_spVPS27p_like"/>
    <property type="match status" value="1"/>
</dbReference>
<dbReference type="CDD" id="cd21385">
    <property type="entry name" value="GAT_Vps27"/>
    <property type="match status" value="1"/>
</dbReference>
<dbReference type="CDD" id="cd16979">
    <property type="entry name" value="VHS_Vps27"/>
    <property type="match status" value="1"/>
</dbReference>
<dbReference type="FunFam" id="1.20.5.1940:FF:000001">
    <property type="entry name" value="Vacuolar protein sorting-associated protein 27"/>
    <property type="match status" value="1"/>
</dbReference>
<dbReference type="FunFam" id="1.25.40.90:FF:000031">
    <property type="entry name" value="Vacuolar protein sorting-associated protein 27"/>
    <property type="match status" value="1"/>
</dbReference>
<dbReference type="FunFam" id="3.30.40.10:FF:000161">
    <property type="entry name" value="Vacuolar protein sorting-associated protein 27"/>
    <property type="match status" value="1"/>
</dbReference>
<dbReference type="Gene3D" id="1.20.5.1940">
    <property type="match status" value="1"/>
</dbReference>
<dbReference type="Gene3D" id="1.25.40.90">
    <property type="match status" value="1"/>
</dbReference>
<dbReference type="Gene3D" id="6.10.140.100">
    <property type="match status" value="1"/>
</dbReference>
<dbReference type="Gene3D" id="3.30.40.10">
    <property type="entry name" value="Zinc/RING finger domain, C3HC4 (zinc finger)"/>
    <property type="match status" value="1"/>
</dbReference>
<dbReference type="InterPro" id="IPR008942">
    <property type="entry name" value="ENTH_VHS"/>
</dbReference>
<dbReference type="InterPro" id="IPR017073">
    <property type="entry name" value="HGS/VPS27"/>
</dbReference>
<dbReference type="InterPro" id="IPR003903">
    <property type="entry name" value="UIM_dom"/>
</dbReference>
<dbReference type="InterPro" id="IPR002014">
    <property type="entry name" value="VHS_dom"/>
</dbReference>
<dbReference type="InterPro" id="IPR049425">
    <property type="entry name" value="Vps27_GAT-like"/>
</dbReference>
<dbReference type="InterPro" id="IPR000306">
    <property type="entry name" value="Znf_FYVE"/>
</dbReference>
<dbReference type="InterPro" id="IPR017455">
    <property type="entry name" value="Znf_FYVE-rel"/>
</dbReference>
<dbReference type="InterPro" id="IPR011011">
    <property type="entry name" value="Znf_FYVE_PHD"/>
</dbReference>
<dbReference type="InterPro" id="IPR013083">
    <property type="entry name" value="Znf_RING/FYVE/PHD"/>
</dbReference>
<dbReference type="PANTHER" id="PTHR47794">
    <property type="entry name" value="VACUOLAR PROTEIN SORTING-ASSOCIATED PROTEIN 27"/>
    <property type="match status" value="1"/>
</dbReference>
<dbReference type="PANTHER" id="PTHR47794:SF1">
    <property type="entry name" value="VACUOLAR PROTEIN SORTING-ASSOCIATED PROTEIN 27"/>
    <property type="match status" value="1"/>
</dbReference>
<dbReference type="Pfam" id="PF01363">
    <property type="entry name" value="FYVE"/>
    <property type="match status" value="1"/>
</dbReference>
<dbReference type="Pfam" id="PF02809">
    <property type="entry name" value="UIM"/>
    <property type="match status" value="2"/>
</dbReference>
<dbReference type="Pfam" id="PF00790">
    <property type="entry name" value="VHS"/>
    <property type="match status" value="1"/>
</dbReference>
<dbReference type="Pfam" id="PF21356">
    <property type="entry name" value="Vps27_GAT-like"/>
    <property type="match status" value="1"/>
</dbReference>
<dbReference type="PIRSF" id="PIRSF036956">
    <property type="entry name" value="Hrs_Vps27"/>
    <property type="match status" value="1"/>
</dbReference>
<dbReference type="SMART" id="SM00064">
    <property type="entry name" value="FYVE"/>
    <property type="match status" value="1"/>
</dbReference>
<dbReference type="SMART" id="SM00726">
    <property type="entry name" value="UIM"/>
    <property type="match status" value="3"/>
</dbReference>
<dbReference type="SMART" id="SM00288">
    <property type="entry name" value="VHS"/>
    <property type="match status" value="1"/>
</dbReference>
<dbReference type="SUPFAM" id="SSF48464">
    <property type="entry name" value="ENTH/VHS domain"/>
    <property type="match status" value="1"/>
</dbReference>
<dbReference type="SUPFAM" id="SSF57903">
    <property type="entry name" value="FYVE/PHD zinc finger"/>
    <property type="match status" value="1"/>
</dbReference>
<dbReference type="PROSITE" id="PS50330">
    <property type="entry name" value="UIM"/>
    <property type="match status" value="2"/>
</dbReference>
<dbReference type="PROSITE" id="PS50179">
    <property type="entry name" value="VHS"/>
    <property type="match status" value="1"/>
</dbReference>
<dbReference type="PROSITE" id="PS50178">
    <property type="entry name" value="ZF_FYVE"/>
    <property type="match status" value="1"/>
</dbReference>
<protein>
    <recommendedName>
        <fullName>Vacuolar protein sorting-associated protein 27</fullName>
    </recommendedName>
</protein>
<sequence length="720" mass="79467">MAGWFGSSTNSAFDEQIERATSSSLEDMPLNLEISDVIRSKTVQPKDAMKSLKKRIGHKNPNVQLATLNLTDTCVKNGGAHFIQEIASREFMDNLTSLLKAPSTIAPNNDVKNKMLELIQSWATAAEGRMNLGYINEVYRSLQREGYHFPPKENIASSMLDSSAPPEWTDSDVCMRCRTAFTFTNRKHHCRNCGNVFCGACSSKTIPLPHLGIMEPVRVDDGCHEKLTIRSRGAPVPRPFDTPKPHKTLYQGAMEPRSARVDDSFDADLKRALEMSLEDAKGTGSSGFVSQSQLQSKPKPSTNGSSRKEPQEEEDPDLAAAIAASLADMEEQKKKYTTTFKQQTASSSAAAPFVAPKNDYELTPVEAENINLFSTLVDRLQHQPPGTILREPQIQELYESIGKLRPKLARTYGETMSKHDTLLDLHAKLSSVVRYYDRMLEERLSSTYNQAGAMYGLPAPTQRPASNLYPSIQSGAPSGAGENYYTGNASQSDPYGRPQSHYAGGYQSTSQQPYRTPGQSQEQYPPAQQPSQPYPNLSQQAPPSSNYQQSSPQLQRQEAPNQQYPPQQAYPSQAPPSTVSDAESANYYYGDNTQGQPSQPPMQRSQSFASQPAQQQPPSPQMYNHAPPQQTPLSPPAYQNPSYPSQQQTAPPPQQQAPPQQAPPPPQQQQWQQPAQTQTQAWQPAPYAAGGYGPESFPSAPQNQLPPQQQKVVDEPLIDL</sequence>
<organism>
    <name type="scientific">Phaeosphaeria nodorum (strain SN15 / ATCC MYA-4574 / FGSC 10173)</name>
    <name type="common">Glume blotch fungus</name>
    <name type="synonym">Parastagonospora nodorum</name>
    <dbReference type="NCBI Taxonomy" id="321614"/>
    <lineage>
        <taxon>Eukaryota</taxon>
        <taxon>Fungi</taxon>
        <taxon>Dikarya</taxon>
        <taxon>Ascomycota</taxon>
        <taxon>Pezizomycotina</taxon>
        <taxon>Dothideomycetes</taxon>
        <taxon>Pleosporomycetidae</taxon>
        <taxon>Pleosporales</taxon>
        <taxon>Pleosporineae</taxon>
        <taxon>Phaeosphaeriaceae</taxon>
        <taxon>Parastagonospora</taxon>
    </lineage>
</organism>
<name>VPS27_PHANO</name>
<accession>Q0U4Z8</accession>
<keyword id="KW-0967">Endosome</keyword>
<keyword id="KW-0472">Membrane</keyword>
<keyword id="KW-0479">Metal-binding</keyword>
<keyword id="KW-0677">Repeat</keyword>
<keyword id="KW-0862">Zinc</keyword>
<keyword id="KW-0863">Zinc-finger</keyword>
<comment type="function">
    <text evidence="1">Component of the ESCRT-0 complex which is the sorting receptor for ubiquitinated cargo proteins at the multivesicular body (MVB) and recruits ESCRT-I to the MVB outer membrane.</text>
</comment>
<comment type="subunit">
    <text>Component of the ESCRT-0 complex composed of HSE1 and VPS27.</text>
</comment>
<comment type="subcellular location">
    <subcellularLocation>
        <location evidence="1">Endosome membrane</location>
        <topology evidence="1">Peripheral membrane protein</topology>
        <orientation evidence="1">Cytoplasmic side</orientation>
    </subcellularLocation>
</comment>
<comment type="domain">
    <text>The FYVE domain is involved in the binding to phosphatidylinositol 3-phosphate (PtdIns(3)P) which is required for the association to endosomal membranes.</text>
</comment>
<comment type="domain">
    <text evidence="1">Both IUM domains are necessary for efficient binding to ubiquitin.</text>
</comment>
<comment type="similarity">
    <text evidence="6">Belongs to the VPS27 family.</text>
</comment>
<comment type="sequence caution" evidence="6">
    <conflict type="erroneous gene model prediction">
        <sequence resource="EMBL-CDS" id="EAT79493"/>
    </conflict>
</comment>
<reference key="1">
    <citation type="journal article" date="2007" name="Plant Cell">
        <title>Dothideomycete-plant interactions illuminated by genome sequencing and EST analysis of the wheat pathogen Stagonospora nodorum.</title>
        <authorList>
            <person name="Hane J.K."/>
            <person name="Lowe R.G.T."/>
            <person name="Solomon P.S."/>
            <person name="Tan K.-C."/>
            <person name="Schoch C.L."/>
            <person name="Spatafora J.W."/>
            <person name="Crous P.W."/>
            <person name="Kodira C.D."/>
            <person name="Birren B.W."/>
            <person name="Galagan J.E."/>
            <person name="Torriani S.F.F."/>
            <person name="McDonald B.A."/>
            <person name="Oliver R.P."/>
        </authorList>
    </citation>
    <scope>NUCLEOTIDE SEQUENCE [LARGE SCALE GENOMIC DNA]</scope>
    <source>
        <strain>SN15 / ATCC MYA-4574 / FGSC 10173</strain>
    </source>
</reference>
<gene>
    <name type="primary">VPS27</name>
    <name type="ORF">SNOG_13166</name>
</gene>